<accession>Q10S58</accession>
<accession>A0A0P0VSQ5</accession>
<accession>Q10S57</accession>
<accession>Q8H8D0</accession>
<proteinExistence type="evidence at transcript level"/>
<comment type="catalytic activity">
    <reaction>
        <text>L-serine + acetyl-CoA = O-acetyl-L-serine + CoA</text>
        <dbReference type="Rhea" id="RHEA:24560"/>
        <dbReference type="ChEBI" id="CHEBI:33384"/>
        <dbReference type="ChEBI" id="CHEBI:57287"/>
        <dbReference type="ChEBI" id="CHEBI:57288"/>
        <dbReference type="ChEBI" id="CHEBI:58340"/>
        <dbReference type="EC" id="2.3.1.30"/>
    </reaction>
</comment>
<comment type="pathway">
    <text>Amino-acid biosynthesis; L-cysteine biosynthesis; L-cysteine from L-serine: step 1/2.</text>
</comment>
<comment type="subunit">
    <text evidence="1">Homomultimer.</text>
</comment>
<comment type="alternative products">
    <event type="alternative splicing"/>
    <isoform>
        <id>Q10S58-1</id>
        <name>1</name>
        <sequence type="displayed"/>
    </isoform>
    <isoform>
        <id>Q10S58-2</id>
        <name>2</name>
        <sequence type="described" ref="VSP_036319 VSP_036320"/>
    </isoform>
</comment>
<comment type="similarity">
    <text evidence="2">Belongs to the transferase hexapeptide repeat family.</text>
</comment>
<comment type="sequence caution" evidence="2">
    <conflict type="erroneous gene model prediction">
        <sequence resource="EMBL-CDS" id="AAN05506"/>
    </conflict>
</comment>
<keyword id="KW-0012">Acyltransferase</keyword>
<keyword id="KW-0025">Alternative splicing</keyword>
<keyword id="KW-0028">Amino-acid biosynthesis</keyword>
<keyword id="KW-1185">Reference proteome</keyword>
<keyword id="KW-0808">Transferase</keyword>
<organism>
    <name type="scientific">Oryza sativa subsp. japonica</name>
    <name type="common">Rice</name>
    <dbReference type="NCBI Taxonomy" id="39947"/>
    <lineage>
        <taxon>Eukaryota</taxon>
        <taxon>Viridiplantae</taxon>
        <taxon>Streptophyta</taxon>
        <taxon>Embryophyta</taxon>
        <taxon>Tracheophyta</taxon>
        <taxon>Spermatophyta</taxon>
        <taxon>Magnoliopsida</taxon>
        <taxon>Liliopsida</taxon>
        <taxon>Poales</taxon>
        <taxon>Poaceae</taxon>
        <taxon>BOP clade</taxon>
        <taxon>Oryzoideae</taxon>
        <taxon>Oryzeae</taxon>
        <taxon>Oryzinae</taxon>
        <taxon>Oryza</taxon>
        <taxon>Oryza sativa</taxon>
    </lineage>
</organism>
<dbReference type="EC" id="2.3.1.30"/>
<dbReference type="EMBL" id="AC099399">
    <property type="protein sequence ID" value="AAN05506.1"/>
    <property type="status" value="ALT_SEQ"/>
    <property type="molecule type" value="Genomic_DNA"/>
</dbReference>
<dbReference type="EMBL" id="DP000009">
    <property type="protein sequence ID" value="ABF93836.1"/>
    <property type="molecule type" value="Genomic_DNA"/>
</dbReference>
<dbReference type="EMBL" id="DP000009">
    <property type="protein sequence ID" value="ABF93837.1"/>
    <property type="molecule type" value="Genomic_DNA"/>
</dbReference>
<dbReference type="EMBL" id="AP008209">
    <property type="protein sequence ID" value="BAF10793.1"/>
    <property type="molecule type" value="Genomic_DNA"/>
</dbReference>
<dbReference type="EMBL" id="AP014959">
    <property type="protein sequence ID" value="BAS82165.1"/>
    <property type="molecule type" value="Genomic_DNA"/>
</dbReference>
<dbReference type="EMBL" id="AK067089">
    <property type="status" value="NOT_ANNOTATED_CDS"/>
    <property type="molecule type" value="mRNA"/>
</dbReference>
<dbReference type="RefSeq" id="XP_015630173.1">
    <property type="nucleotide sequence ID" value="XM_015774687.1"/>
</dbReference>
<dbReference type="SMR" id="Q10S58"/>
<dbReference type="FunCoup" id="Q10S58">
    <property type="interactions" value="377"/>
</dbReference>
<dbReference type="STRING" id="39947.Q10S58"/>
<dbReference type="PaxDb" id="39947-Q10S58"/>
<dbReference type="EnsemblPlants" id="Os03t0133900-01">
    <molecule id="Q10S58-1"/>
    <property type="protein sequence ID" value="Os03t0133900-01"/>
    <property type="gene ID" value="Os03g0133900"/>
</dbReference>
<dbReference type="Gramene" id="Os03t0133900-01">
    <molecule id="Q10S58-1"/>
    <property type="protein sequence ID" value="Os03t0133900-01"/>
    <property type="gene ID" value="Os03g0133900"/>
</dbReference>
<dbReference type="KEGG" id="dosa:Os03g0133900"/>
<dbReference type="eggNOG" id="KOG4750">
    <property type="taxonomic scope" value="Eukaryota"/>
</dbReference>
<dbReference type="HOGENOM" id="CLU_051638_0_0_1"/>
<dbReference type="InParanoid" id="Q10S58"/>
<dbReference type="OMA" id="MIVSRNF"/>
<dbReference type="OrthoDB" id="25818at2759"/>
<dbReference type="PlantReactome" id="R-OSA-1119331">
    <property type="pathway name" value="Cysteine biosynthesis I"/>
</dbReference>
<dbReference type="UniPathway" id="UPA00136">
    <property type="reaction ID" value="UER00199"/>
</dbReference>
<dbReference type="Proteomes" id="UP000000763">
    <property type="component" value="Chromosome 3"/>
</dbReference>
<dbReference type="Proteomes" id="UP000059680">
    <property type="component" value="Chromosome 3"/>
</dbReference>
<dbReference type="GO" id="GO:0005829">
    <property type="term" value="C:cytosol"/>
    <property type="evidence" value="ECO:0000318"/>
    <property type="project" value="GO_Central"/>
</dbReference>
<dbReference type="GO" id="GO:0009001">
    <property type="term" value="F:serine O-acetyltransferase activity"/>
    <property type="evidence" value="ECO:0000318"/>
    <property type="project" value="GO_Central"/>
</dbReference>
<dbReference type="GO" id="GO:0006535">
    <property type="term" value="P:cysteine biosynthetic process from serine"/>
    <property type="evidence" value="ECO:0007669"/>
    <property type="project" value="InterPro"/>
</dbReference>
<dbReference type="CDD" id="cd03354">
    <property type="entry name" value="LbH_SAT"/>
    <property type="match status" value="1"/>
</dbReference>
<dbReference type="FunFam" id="2.160.10.10:FF:000002">
    <property type="entry name" value="Serine acetyltransferase"/>
    <property type="match status" value="1"/>
</dbReference>
<dbReference type="FunFam" id="1.10.3130.10:FF:000005">
    <property type="entry name" value="Serine acetyltransferase 4"/>
    <property type="match status" value="1"/>
</dbReference>
<dbReference type="Gene3D" id="2.160.10.10">
    <property type="entry name" value="Hexapeptide repeat proteins"/>
    <property type="match status" value="1"/>
</dbReference>
<dbReference type="Gene3D" id="1.10.3130.10">
    <property type="entry name" value="serine acetyltransferase, domain 1"/>
    <property type="match status" value="1"/>
</dbReference>
<dbReference type="InterPro" id="IPR001451">
    <property type="entry name" value="Hexapep"/>
</dbReference>
<dbReference type="InterPro" id="IPR018357">
    <property type="entry name" value="Hexapep_transf_CS"/>
</dbReference>
<dbReference type="InterPro" id="IPR045304">
    <property type="entry name" value="LbH_SAT"/>
</dbReference>
<dbReference type="InterPro" id="IPR010493">
    <property type="entry name" value="Ser_AcTrfase_N"/>
</dbReference>
<dbReference type="InterPro" id="IPR042122">
    <property type="entry name" value="Ser_AcTrfase_N_sf"/>
</dbReference>
<dbReference type="InterPro" id="IPR005881">
    <property type="entry name" value="Ser_O-AcTrfase"/>
</dbReference>
<dbReference type="InterPro" id="IPR053376">
    <property type="entry name" value="Serine_acetyltransferase"/>
</dbReference>
<dbReference type="InterPro" id="IPR011004">
    <property type="entry name" value="Trimer_LpxA-like_sf"/>
</dbReference>
<dbReference type="NCBIfam" id="TIGR01172">
    <property type="entry name" value="cysE"/>
    <property type="match status" value="1"/>
</dbReference>
<dbReference type="NCBIfam" id="NF041874">
    <property type="entry name" value="EPS_EpsC"/>
    <property type="match status" value="1"/>
</dbReference>
<dbReference type="PANTHER" id="PTHR42811">
    <property type="entry name" value="SERINE ACETYLTRANSFERASE"/>
    <property type="match status" value="1"/>
</dbReference>
<dbReference type="Pfam" id="PF00132">
    <property type="entry name" value="Hexapep"/>
    <property type="match status" value="1"/>
</dbReference>
<dbReference type="Pfam" id="PF06426">
    <property type="entry name" value="SATase_N"/>
    <property type="match status" value="1"/>
</dbReference>
<dbReference type="SMART" id="SM00971">
    <property type="entry name" value="SATase_N"/>
    <property type="match status" value="1"/>
</dbReference>
<dbReference type="SUPFAM" id="SSF51161">
    <property type="entry name" value="Trimeric LpxA-like enzymes"/>
    <property type="match status" value="1"/>
</dbReference>
<dbReference type="PROSITE" id="PS00101">
    <property type="entry name" value="HEXAPEP_TRANSFERASES"/>
    <property type="match status" value="1"/>
</dbReference>
<feature type="chain" id="PRO_0000363659" description="Probable serine acetyltransferase 2">
    <location>
        <begin position="1"/>
        <end position="354"/>
    </location>
</feature>
<feature type="splice variant" id="VSP_036319" description="In isoform 2." evidence="2">
    <original>SMAVGNPAKVVGYKDKEDPSLT</original>
    <variation>REQNQGRRAGRGGRGDNMIMIK</variation>
    <location>
        <begin position="305"/>
        <end position="326"/>
    </location>
</feature>
<feature type="splice variant" id="VSP_036320" description="In isoform 2." evidence="2">
    <location>
        <begin position="327"/>
        <end position="354"/>
    </location>
</feature>
<feature type="sequence conflict" description="In Ref. 5; AK067089." evidence="2" ref="5">
    <original>K</original>
    <variation>R</variation>
    <location>
        <position position="347"/>
    </location>
</feature>
<evidence type="ECO:0000250" key="1"/>
<evidence type="ECO:0000305" key="2"/>
<sequence length="354" mass="37517">MTSCGCLVLEKVEDHGGEAAGRGRGRLAQGGGGGGGGCGSCAGEWRSRSETMFPIYVMGSSRASSAAAARGIVDAAGDPIWEAVKSEAKSEAEKEPILSSFLYASVLSHDCLERALSFVLANRLEDPTLLATQLIDIFNDVMMNNKDIRRSIRLDAQAFKDRDPACAQYSWALLYLKGYHSVQSYRIAHVLWNQGRKVLALALQSRISEVFAVDIHPAARIGEGILLDHGTGLVIGETAIVGNWVSLMQGVTLGGTGKENGDRHPKIGQGALLGAGATILGNINVGEGAMIAAGSLVLKDVPPHSMAVGNPAKVVGYKDKEDPSLTMKHDARRDYFEHVAVSFSDDKANGSVVK</sequence>
<gene>
    <name type="primary">SAT2</name>
    <name type="ordered locus">Os03g0133900</name>
    <name type="ordered locus">LOC_Os03g04140</name>
    <name type="ORF">OJ1006F06.16</name>
</gene>
<reference key="1">
    <citation type="journal article" date="2005" name="Genome Res.">
        <title>Sequence, annotation, and analysis of synteny between rice chromosome 3 and diverged grass species.</title>
        <authorList>
            <consortium name="The rice chromosome 3 sequencing consortium"/>
            <person name="Buell C.R."/>
            <person name="Yuan Q."/>
            <person name="Ouyang S."/>
            <person name="Liu J."/>
            <person name="Zhu W."/>
            <person name="Wang A."/>
            <person name="Maiti R."/>
            <person name="Haas B."/>
            <person name="Wortman J."/>
            <person name="Pertea M."/>
            <person name="Jones K.M."/>
            <person name="Kim M."/>
            <person name="Overton L."/>
            <person name="Tsitrin T."/>
            <person name="Fadrosh D."/>
            <person name="Bera J."/>
            <person name="Weaver B."/>
            <person name="Jin S."/>
            <person name="Johri S."/>
            <person name="Reardon M."/>
            <person name="Webb K."/>
            <person name="Hill J."/>
            <person name="Moffat K."/>
            <person name="Tallon L."/>
            <person name="Van Aken S."/>
            <person name="Lewis M."/>
            <person name="Utterback T."/>
            <person name="Feldblyum T."/>
            <person name="Zismann V."/>
            <person name="Iobst S."/>
            <person name="Hsiao J."/>
            <person name="de Vazeille A.R."/>
            <person name="Salzberg S.L."/>
            <person name="White O."/>
            <person name="Fraser C.M."/>
            <person name="Yu Y."/>
            <person name="Kim H."/>
            <person name="Rambo T."/>
            <person name="Currie J."/>
            <person name="Collura K."/>
            <person name="Kernodle-Thompson S."/>
            <person name="Wei F."/>
            <person name="Kudrna K."/>
            <person name="Ammiraju J.S.S."/>
            <person name="Luo M."/>
            <person name="Goicoechea J.L."/>
            <person name="Wing R.A."/>
            <person name="Henry D."/>
            <person name="Oates R."/>
            <person name="Palmer M."/>
            <person name="Pries G."/>
            <person name="Saski C."/>
            <person name="Simmons J."/>
            <person name="Soderlund C."/>
            <person name="Nelson W."/>
            <person name="de la Bastide M."/>
            <person name="Spiegel L."/>
            <person name="Nascimento L."/>
            <person name="Huang E."/>
            <person name="Preston R."/>
            <person name="Zutavern T."/>
            <person name="Palmer L."/>
            <person name="O'Shaughnessy A."/>
            <person name="Dike S."/>
            <person name="McCombie W.R."/>
            <person name="Minx P."/>
            <person name="Cordum H."/>
            <person name="Wilson R."/>
            <person name="Jin W."/>
            <person name="Lee H.R."/>
            <person name="Jiang J."/>
            <person name="Jackson S."/>
        </authorList>
    </citation>
    <scope>NUCLEOTIDE SEQUENCE [LARGE SCALE GENOMIC DNA]</scope>
    <source>
        <strain>cv. Nipponbare</strain>
    </source>
</reference>
<reference key="2">
    <citation type="journal article" date="2005" name="Nature">
        <title>The map-based sequence of the rice genome.</title>
        <authorList>
            <consortium name="International rice genome sequencing project (IRGSP)"/>
        </authorList>
    </citation>
    <scope>NUCLEOTIDE SEQUENCE [LARGE SCALE GENOMIC DNA]</scope>
    <source>
        <strain>cv. Nipponbare</strain>
    </source>
</reference>
<reference key="3">
    <citation type="journal article" date="2008" name="Nucleic Acids Res.">
        <title>The rice annotation project database (RAP-DB): 2008 update.</title>
        <authorList>
            <consortium name="The rice annotation project (RAP)"/>
        </authorList>
    </citation>
    <scope>GENOME REANNOTATION</scope>
    <source>
        <strain>cv. Nipponbare</strain>
    </source>
</reference>
<reference key="4">
    <citation type="journal article" date="2013" name="Rice">
        <title>Improvement of the Oryza sativa Nipponbare reference genome using next generation sequence and optical map data.</title>
        <authorList>
            <person name="Kawahara Y."/>
            <person name="de la Bastide M."/>
            <person name="Hamilton J.P."/>
            <person name="Kanamori H."/>
            <person name="McCombie W.R."/>
            <person name="Ouyang S."/>
            <person name="Schwartz D.C."/>
            <person name="Tanaka T."/>
            <person name="Wu J."/>
            <person name="Zhou S."/>
            <person name="Childs K.L."/>
            <person name="Davidson R.M."/>
            <person name="Lin H."/>
            <person name="Quesada-Ocampo L."/>
            <person name="Vaillancourt B."/>
            <person name="Sakai H."/>
            <person name="Lee S.S."/>
            <person name="Kim J."/>
            <person name="Numa H."/>
            <person name="Itoh T."/>
            <person name="Buell C.R."/>
            <person name="Matsumoto T."/>
        </authorList>
    </citation>
    <scope>GENOME REANNOTATION</scope>
    <source>
        <strain>cv. Nipponbare</strain>
    </source>
</reference>
<reference key="5">
    <citation type="journal article" date="2003" name="Science">
        <title>Collection, mapping, and annotation of over 28,000 cDNA clones from japonica rice.</title>
        <authorList>
            <consortium name="The rice full-length cDNA consortium"/>
        </authorList>
    </citation>
    <scope>NUCLEOTIDE SEQUENCE [LARGE SCALE MRNA] (ISOFORM 1)</scope>
    <source>
        <strain>cv. Nipponbare</strain>
    </source>
</reference>
<name>SAT2_ORYSJ</name>
<protein>
    <recommendedName>
        <fullName>Probable serine acetyltransferase 2</fullName>
        <ecNumber>2.3.1.30</ecNumber>
    </recommendedName>
    <alternativeName>
        <fullName>OsSERAT3;1</fullName>
    </alternativeName>
</protein>